<feature type="chain" id="PRO_1000026345" description="Phosphoenolpyruvate carboxykinase (ATP)">
    <location>
        <begin position="1"/>
        <end position="537"/>
    </location>
</feature>
<feature type="region of interest" description="Disordered" evidence="2">
    <location>
        <begin position="311"/>
        <end position="342"/>
    </location>
</feature>
<feature type="compositionally biased region" description="Basic and acidic residues" evidence="2">
    <location>
        <begin position="311"/>
        <end position="321"/>
    </location>
</feature>
<feature type="binding site" evidence="1">
    <location>
        <position position="61"/>
    </location>
    <ligand>
        <name>substrate</name>
    </ligand>
</feature>
<feature type="binding site" evidence="1">
    <location>
        <position position="195"/>
    </location>
    <ligand>
        <name>substrate</name>
    </ligand>
</feature>
<feature type="binding site" evidence="1">
    <location>
        <position position="201"/>
    </location>
    <ligand>
        <name>ATP</name>
        <dbReference type="ChEBI" id="CHEBI:30616"/>
    </ligand>
</feature>
<feature type="binding site" evidence="1">
    <location>
        <position position="201"/>
    </location>
    <ligand>
        <name>Mn(2+)</name>
        <dbReference type="ChEBI" id="CHEBI:29035"/>
    </ligand>
</feature>
<feature type="binding site" evidence="1">
    <location>
        <position position="201"/>
    </location>
    <ligand>
        <name>substrate</name>
    </ligand>
</feature>
<feature type="binding site" evidence="1">
    <location>
        <position position="220"/>
    </location>
    <ligand>
        <name>ATP</name>
        <dbReference type="ChEBI" id="CHEBI:30616"/>
    </ligand>
</feature>
<feature type="binding site" evidence="1">
    <location>
        <position position="220"/>
    </location>
    <ligand>
        <name>Mn(2+)</name>
        <dbReference type="ChEBI" id="CHEBI:29035"/>
    </ligand>
</feature>
<feature type="binding site" evidence="1">
    <location>
        <begin position="236"/>
        <end position="244"/>
    </location>
    <ligand>
        <name>ATP</name>
        <dbReference type="ChEBI" id="CHEBI:30616"/>
    </ligand>
</feature>
<feature type="binding site" evidence="1">
    <location>
        <position position="257"/>
    </location>
    <ligand>
        <name>Mn(2+)</name>
        <dbReference type="ChEBI" id="CHEBI:29035"/>
    </ligand>
</feature>
<feature type="binding site" evidence="1">
    <location>
        <position position="285"/>
    </location>
    <ligand>
        <name>ATP</name>
        <dbReference type="ChEBI" id="CHEBI:30616"/>
    </ligand>
</feature>
<feature type="binding site" evidence="1">
    <location>
        <position position="323"/>
    </location>
    <ligand>
        <name>ATP</name>
        <dbReference type="ChEBI" id="CHEBI:30616"/>
    </ligand>
</feature>
<feature type="binding site" evidence="1">
    <location>
        <position position="323"/>
    </location>
    <ligand>
        <name>substrate</name>
    </ligand>
</feature>
<feature type="binding site" evidence="1">
    <location>
        <position position="448"/>
    </location>
    <ligand>
        <name>ATP</name>
        <dbReference type="ChEBI" id="CHEBI:30616"/>
    </ligand>
</feature>
<reference key="1">
    <citation type="submission" date="2006-03" db="EMBL/GenBank/DDBJ databases">
        <title>Complete sequence of Rhodopseudomonas palustris BisB5.</title>
        <authorList>
            <consortium name="US DOE Joint Genome Institute"/>
            <person name="Copeland A."/>
            <person name="Lucas S."/>
            <person name="Lapidus A."/>
            <person name="Barry K."/>
            <person name="Detter J.C."/>
            <person name="Glavina del Rio T."/>
            <person name="Hammon N."/>
            <person name="Israni S."/>
            <person name="Dalin E."/>
            <person name="Tice H."/>
            <person name="Pitluck S."/>
            <person name="Chain P."/>
            <person name="Malfatti S."/>
            <person name="Shin M."/>
            <person name="Vergez L."/>
            <person name="Schmutz J."/>
            <person name="Larimer F."/>
            <person name="Land M."/>
            <person name="Hauser L."/>
            <person name="Pelletier D.A."/>
            <person name="Kyrpides N."/>
            <person name="Lykidis A."/>
            <person name="Oda Y."/>
            <person name="Harwood C.S."/>
            <person name="Richardson P."/>
        </authorList>
    </citation>
    <scope>NUCLEOTIDE SEQUENCE [LARGE SCALE GENOMIC DNA]</scope>
    <source>
        <strain>BisB5</strain>
    </source>
</reference>
<name>PCKA_RHOPS</name>
<accession>Q13E86</accession>
<keyword id="KW-0067">ATP-binding</keyword>
<keyword id="KW-0963">Cytoplasm</keyword>
<keyword id="KW-0210">Decarboxylase</keyword>
<keyword id="KW-0312">Gluconeogenesis</keyword>
<keyword id="KW-0456">Lyase</keyword>
<keyword id="KW-0464">Manganese</keyword>
<keyword id="KW-0479">Metal-binding</keyword>
<keyword id="KW-0547">Nucleotide-binding</keyword>
<proteinExistence type="inferred from homology"/>
<sequence>MQETGVHNGAHGADKFGLKNLKGIYWNFGAPQLYEHALRNGEAVLSADGALVADTGVFTGRSPKDKFTVRDATTETTMWWGGNQSITAEQFETLYQDFIKHAEGMTLFAQDLYGGADPSFQIKTRVFTELAWHSLFIRTLLRRPDRADLAAFVPELTLIDLPSFRADPKRHGCRSENVVAIDFARKIVLIGGTQYAGEMKKSVFTTLNYYLPERGVLPMHCSANVGPAGDTAIFFGLSGTGKTTLSADPNRTLIGDDEHGWGKDGVFNFEGGCYAKCIKLSPEAEPEIFAASSRFGAVLENVVLDEITRKPDFDNGSKTENTRSAYPLESIPNASPTGRAGQPKNVVMLAADAFGVMPPIAKLTPAQAMYHFLSGYTAKVAGTERGVTEPTPEFSTCFGSPFLPRDPSVYGNMLRDLIHNHNVDCWLVNTGWTGGKYGTGHRMPIKVTRALLTAALDGSLRNAEFRTDPYFGFAVPTALPGVPSDILEPAKTWADKAEFDKTARALVGMFQKNFAKFEAQVDADVRAAAPDVKIAAE</sequence>
<gene>
    <name evidence="1" type="primary">pckA</name>
    <name type="ordered locus">RPD_0365</name>
</gene>
<dbReference type="EC" id="4.1.1.49" evidence="1"/>
<dbReference type="EMBL" id="CP000283">
    <property type="protein sequence ID" value="ABE37603.1"/>
    <property type="molecule type" value="Genomic_DNA"/>
</dbReference>
<dbReference type="SMR" id="Q13E86"/>
<dbReference type="STRING" id="316057.RPD_0365"/>
<dbReference type="KEGG" id="rpd:RPD_0365"/>
<dbReference type="eggNOG" id="COG1866">
    <property type="taxonomic scope" value="Bacteria"/>
</dbReference>
<dbReference type="HOGENOM" id="CLU_018247_0_1_5"/>
<dbReference type="BioCyc" id="RPAL316057:RPD_RS01885-MONOMER"/>
<dbReference type="UniPathway" id="UPA00138"/>
<dbReference type="Proteomes" id="UP000001818">
    <property type="component" value="Chromosome"/>
</dbReference>
<dbReference type="GO" id="GO:0005829">
    <property type="term" value="C:cytosol"/>
    <property type="evidence" value="ECO:0007669"/>
    <property type="project" value="TreeGrafter"/>
</dbReference>
<dbReference type="GO" id="GO:0005524">
    <property type="term" value="F:ATP binding"/>
    <property type="evidence" value="ECO:0007669"/>
    <property type="project" value="UniProtKB-UniRule"/>
</dbReference>
<dbReference type="GO" id="GO:0046872">
    <property type="term" value="F:metal ion binding"/>
    <property type="evidence" value="ECO:0007669"/>
    <property type="project" value="UniProtKB-KW"/>
</dbReference>
<dbReference type="GO" id="GO:0004612">
    <property type="term" value="F:phosphoenolpyruvate carboxykinase (ATP) activity"/>
    <property type="evidence" value="ECO:0007669"/>
    <property type="project" value="UniProtKB-UniRule"/>
</dbReference>
<dbReference type="GO" id="GO:0006094">
    <property type="term" value="P:gluconeogenesis"/>
    <property type="evidence" value="ECO:0007669"/>
    <property type="project" value="UniProtKB-UniRule"/>
</dbReference>
<dbReference type="CDD" id="cd00484">
    <property type="entry name" value="PEPCK_ATP"/>
    <property type="match status" value="1"/>
</dbReference>
<dbReference type="Gene3D" id="3.90.228.20">
    <property type="match status" value="1"/>
</dbReference>
<dbReference type="Gene3D" id="3.40.449.10">
    <property type="entry name" value="Phosphoenolpyruvate Carboxykinase, domain 1"/>
    <property type="match status" value="1"/>
</dbReference>
<dbReference type="Gene3D" id="2.170.8.10">
    <property type="entry name" value="Phosphoenolpyruvate Carboxykinase, domain 2"/>
    <property type="match status" value="1"/>
</dbReference>
<dbReference type="HAMAP" id="MF_00453">
    <property type="entry name" value="PEPCK_ATP"/>
    <property type="match status" value="1"/>
</dbReference>
<dbReference type="InterPro" id="IPR001272">
    <property type="entry name" value="PEP_carboxykinase_ATP"/>
</dbReference>
<dbReference type="InterPro" id="IPR013035">
    <property type="entry name" value="PEP_carboxykinase_C"/>
</dbReference>
<dbReference type="InterPro" id="IPR008210">
    <property type="entry name" value="PEP_carboxykinase_N"/>
</dbReference>
<dbReference type="InterPro" id="IPR015994">
    <property type="entry name" value="PEPCK_ATP_CS"/>
</dbReference>
<dbReference type="NCBIfam" id="TIGR00224">
    <property type="entry name" value="pckA"/>
    <property type="match status" value="1"/>
</dbReference>
<dbReference type="NCBIfam" id="NF006820">
    <property type="entry name" value="PRK09344.1-2"/>
    <property type="match status" value="1"/>
</dbReference>
<dbReference type="NCBIfam" id="NF006821">
    <property type="entry name" value="PRK09344.1-3"/>
    <property type="match status" value="1"/>
</dbReference>
<dbReference type="NCBIfam" id="NF006822">
    <property type="entry name" value="PRK09344.1-4"/>
    <property type="match status" value="1"/>
</dbReference>
<dbReference type="PANTHER" id="PTHR30031:SF0">
    <property type="entry name" value="PHOSPHOENOLPYRUVATE CARBOXYKINASE (ATP)"/>
    <property type="match status" value="1"/>
</dbReference>
<dbReference type="PANTHER" id="PTHR30031">
    <property type="entry name" value="PHOSPHOENOLPYRUVATE CARBOXYKINASE ATP"/>
    <property type="match status" value="1"/>
</dbReference>
<dbReference type="Pfam" id="PF01293">
    <property type="entry name" value="PEPCK_ATP"/>
    <property type="match status" value="1"/>
</dbReference>
<dbReference type="PIRSF" id="PIRSF006294">
    <property type="entry name" value="PEP_crbxkin"/>
    <property type="match status" value="1"/>
</dbReference>
<dbReference type="SUPFAM" id="SSF68923">
    <property type="entry name" value="PEP carboxykinase N-terminal domain"/>
    <property type="match status" value="1"/>
</dbReference>
<dbReference type="SUPFAM" id="SSF53795">
    <property type="entry name" value="PEP carboxykinase-like"/>
    <property type="match status" value="1"/>
</dbReference>
<dbReference type="PROSITE" id="PS00532">
    <property type="entry name" value="PEPCK_ATP"/>
    <property type="match status" value="1"/>
</dbReference>
<protein>
    <recommendedName>
        <fullName evidence="1">Phosphoenolpyruvate carboxykinase (ATP)</fullName>
        <shortName evidence="1">PCK</shortName>
        <shortName evidence="1">PEP carboxykinase</shortName>
        <shortName evidence="1">PEPCK</shortName>
        <ecNumber evidence="1">4.1.1.49</ecNumber>
    </recommendedName>
</protein>
<evidence type="ECO:0000255" key="1">
    <source>
        <dbReference type="HAMAP-Rule" id="MF_00453"/>
    </source>
</evidence>
<evidence type="ECO:0000256" key="2">
    <source>
        <dbReference type="SAM" id="MobiDB-lite"/>
    </source>
</evidence>
<organism>
    <name type="scientific">Rhodopseudomonas palustris (strain BisB5)</name>
    <dbReference type="NCBI Taxonomy" id="316057"/>
    <lineage>
        <taxon>Bacteria</taxon>
        <taxon>Pseudomonadati</taxon>
        <taxon>Pseudomonadota</taxon>
        <taxon>Alphaproteobacteria</taxon>
        <taxon>Hyphomicrobiales</taxon>
        <taxon>Nitrobacteraceae</taxon>
        <taxon>Rhodopseudomonas</taxon>
    </lineage>
</organism>
<comment type="function">
    <text evidence="1">Involved in the gluconeogenesis. Catalyzes the conversion of oxaloacetate (OAA) to phosphoenolpyruvate (PEP) through direct phosphoryl transfer between the nucleoside triphosphate and OAA.</text>
</comment>
<comment type="catalytic activity">
    <reaction evidence="1">
        <text>oxaloacetate + ATP = phosphoenolpyruvate + ADP + CO2</text>
        <dbReference type="Rhea" id="RHEA:18617"/>
        <dbReference type="ChEBI" id="CHEBI:16452"/>
        <dbReference type="ChEBI" id="CHEBI:16526"/>
        <dbReference type="ChEBI" id="CHEBI:30616"/>
        <dbReference type="ChEBI" id="CHEBI:58702"/>
        <dbReference type="ChEBI" id="CHEBI:456216"/>
        <dbReference type="EC" id="4.1.1.49"/>
    </reaction>
</comment>
<comment type="cofactor">
    <cofactor evidence="1">
        <name>Mn(2+)</name>
        <dbReference type="ChEBI" id="CHEBI:29035"/>
    </cofactor>
    <text evidence="1">Binds 1 Mn(2+) ion per subunit.</text>
</comment>
<comment type="pathway">
    <text evidence="1">Carbohydrate biosynthesis; gluconeogenesis.</text>
</comment>
<comment type="subcellular location">
    <subcellularLocation>
        <location evidence="1">Cytoplasm</location>
    </subcellularLocation>
</comment>
<comment type="similarity">
    <text evidence="1">Belongs to the phosphoenolpyruvate carboxykinase (ATP) family.</text>
</comment>